<reference key="1">
    <citation type="journal article" date="1991" name="J. Virol.">
        <title>Evolutionary analysis of the influenza A virus M gene with comparison of the M1 and M2 proteins.</title>
        <authorList>
            <person name="Ito T."/>
            <person name="Gorman O.T."/>
            <person name="Kawaoka Y."/>
            <person name="Bean W.J."/>
            <person name="Webster R.G."/>
        </authorList>
    </citation>
    <scope>NUCLEOTIDE SEQUENCE [GENOMIC RNA]</scope>
</reference>
<proteinExistence type="inferred from homology"/>
<protein>
    <recommendedName>
        <fullName evidence="1">Matrix protein 1</fullName>
        <shortName evidence="1">M1</shortName>
    </recommendedName>
</protein>
<keyword id="KW-0025">Alternative splicing</keyword>
<keyword id="KW-1048">Host nucleus</keyword>
<keyword id="KW-0472">Membrane</keyword>
<keyword id="KW-0694">RNA-binding</keyword>
<keyword id="KW-0468">Viral matrix protein</keyword>
<keyword id="KW-0946">Virion</keyword>
<name>M1_I80AC</name>
<dbReference type="EMBL" id="M63538">
    <property type="protein sequence ID" value="AAA43296.1"/>
    <property type="molecule type" value="Genomic_RNA"/>
</dbReference>
<dbReference type="SMR" id="Q76V02"/>
<dbReference type="GO" id="GO:0042025">
    <property type="term" value="C:host cell nucleus"/>
    <property type="evidence" value="ECO:0007669"/>
    <property type="project" value="UniProtKB-SubCell"/>
</dbReference>
<dbReference type="GO" id="GO:0016020">
    <property type="term" value="C:membrane"/>
    <property type="evidence" value="ECO:0007669"/>
    <property type="project" value="UniProtKB-KW"/>
</dbReference>
<dbReference type="GO" id="GO:0055036">
    <property type="term" value="C:virion membrane"/>
    <property type="evidence" value="ECO:0007669"/>
    <property type="project" value="UniProtKB-SubCell"/>
</dbReference>
<dbReference type="GO" id="GO:0003723">
    <property type="term" value="F:RNA binding"/>
    <property type="evidence" value="ECO:0007669"/>
    <property type="project" value="UniProtKB-UniRule"/>
</dbReference>
<dbReference type="GO" id="GO:0039660">
    <property type="term" value="F:structural constituent of virion"/>
    <property type="evidence" value="ECO:0007669"/>
    <property type="project" value="UniProtKB-UniRule"/>
</dbReference>
<dbReference type="GO" id="GO:0046761">
    <property type="term" value="P:viral budding from plasma membrane"/>
    <property type="evidence" value="ECO:0007669"/>
    <property type="project" value="UniProtKB-UniRule"/>
</dbReference>
<dbReference type="FunFam" id="1.10.10.180:FF:000001">
    <property type="entry name" value="Matrix protein 1"/>
    <property type="match status" value="1"/>
</dbReference>
<dbReference type="FunFam" id="1.20.91.10:FF:000001">
    <property type="entry name" value="Matrix protein 1"/>
    <property type="match status" value="1"/>
</dbReference>
<dbReference type="Gene3D" id="1.10.10.180">
    <property type="match status" value="1"/>
</dbReference>
<dbReference type="Gene3D" id="1.20.91.10">
    <property type="match status" value="1"/>
</dbReference>
<dbReference type="HAMAP" id="MF_04068">
    <property type="entry name" value="INFV_M1"/>
    <property type="match status" value="1"/>
</dbReference>
<dbReference type="InterPro" id="IPR036039">
    <property type="entry name" value="Flu_matrix_M1"/>
</dbReference>
<dbReference type="InterPro" id="IPR013188">
    <property type="entry name" value="Flu_matrix_M1_C"/>
</dbReference>
<dbReference type="InterPro" id="IPR001561">
    <property type="entry name" value="Flu_matrix_M1_N"/>
</dbReference>
<dbReference type="InterPro" id="IPR015423">
    <property type="entry name" value="Flu_matrix_M1_N_sub1"/>
</dbReference>
<dbReference type="InterPro" id="IPR015799">
    <property type="entry name" value="Flu_matrix_M1_N_sub2"/>
</dbReference>
<dbReference type="InterPro" id="IPR037533">
    <property type="entry name" value="INFV_M1"/>
</dbReference>
<dbReference type="Pfam" id="PF00598">
    <property type="entry name" value="Flu_M1"/>
    <property type="match status" value="1"/>
</dbReference>
<dbReference type="Pfam" id="PF08289">
    <property type="entry name" value="Flu_M1_C"/>
    <property type="match status" value="1"/>
</dbReference>
<dbReference type="SMART" id="SM00759">
    <property type="entry name" value="Flu_M1_C"/>
    <property type="match status" value="1"/>
</dbReference>
<dbReference type="SUPFAM" id="SSF48145">
    <property type="entry name" value="Influenza virus matrix protein M1"/>
    <property type="match status" value="1"/>
</dbReference>
<organismHost>
    <name type="scientific">Aves</name>
    <dbReference type="NCBI Taxonomy" id="8782"/>
</organismHost>
<accession>Q76V02</accession>
<organism>
    <name type="scientific">Influenza A virus (strain A/Gull/Massachusetts/26/1980 H13N6)</name>
    <dbReference type="NCBI Taxonomy" id="385626"/>
    <lineage>
        <taxon>Viruses</taxon>
        <taxon>Riboviria</taxon>
        <taxon>Orthornavirae</taxon>
        <taxon>Negarnaviricota</taxon>
        <taxon>Polyploviricotina</taxon>
        <taxon>Insthoviricetes</taxon>
        <taxon>Articulavirales</taxon>
        <taxon>Orthomyxoviridae</taxon>
        <taxon>Alphainfluenzavirus</taxon>
        <taxon>Alphainfluenzavirus influenzae</taxon>
        <taxon>Influenza A virus</taxon>
    </lineage>
</organism>
<gene>
    <name evidence="1" type="primary">M</name>
</gene>
<evidence type="ECO:0000255" key="1">
    <source>
        <dbReference type="HAMAP-Rule" id="MF_04068"/>
    </source>
</evidence>
<comment type="function">
    <text evidence="1">Plays critical roles in virus replication, from virus entry and uncoating to assembly and budding of the virus particle. M1 binding to ribonucleocapsids (RNPs) in nucleus seems to inhibit viral transcription. Interaction of viral NEP with M1-RNP is thought to promote nuclear export of the complex, which is targeted to the virion assembly site at the apical plasma membrane in polarized epithelial cells. Interactions with NA and HA may bring M1, a non-raft-associated protein, into lipid rafts. Forms a continuous shell on the inner side of the lipid bilayer in virion, where it binds the RNP. During virus entry into cell, the M2 ion channel acidifies the internal virion core, inducing M1 dissociation from the RNP. M1-free RNPs are transported to the nucleus, where viral transcription and replication can take place.</text>
</comment>
<comment type="function">
    <text evidence="1">Determines the virion's shape: spherical or filamentous. Clinical isolates of influenza are characterized by the presence of significant proportion of filamentous virions, whereas after multiple passage on eggs or cell culture, virions have only spherical morphology. Filamentous virions are thought to be important to infect neighboring cells, and spherical virions more suited to spread through aerosol between hosts organisms.</text>
</comment>
<comment type="subunit">
    <text evidence="1">Homodimer and homomultimer. Interacts with NEP. Binds ribonucleocapsid by both interacting with genomic RNA and NP protein. May interact with HA and NA. Cannot bind NP without genomic RNA.</text>
</comment>
<comment type="subcellular location">
    <subcellularLocation>
        <location evidence="1">Virion membrane</location>
        <topology evidence="1">Peripheral membrane protein</topology>
        <orientation evidence="1">Cytoplasmic side</orientation>
    </subcellularLocation>
    <subcellularLocation>
        <location evidence="1">Host nucleus</location>
    </subcellularLocation>
</comment>
<comment type="alternative products">
    <event type="alternative splicing"/>
    <isoform>
        <id>Q76V02-1</id>
        <name>M1</name>
        <sequence type="displayed"/>
    </isoform>
    <isoform>
        <id>Q89881-1</id>
        <name>M2</name>
        <sequence type="external"/>
    </isoform>
    <text>Only the first 9 residues are shared by the 2 isoforms.</text>
</comment>
<comment type="miscellaneous">
    <text evidence="1">Most abundant protein in virion. When expressed alone can form virus-like particles in transfected cells.</text>
</comment>
<comment type="similarity">
    <text evidence="1">Belongs to the influenza viruses Matrix protein M1 family.</text>
</comment>
<feature type="chain" id="PRO_0000326314" description="Matrix protein 1">
    <location>
        <begin position="1"/>
        <end position="252"/>
    </location>
</feature>
<feature type="region of interest" description="Membrane-binding" evidence="1">
    <location>
        <begin position="1"/>
        <end position="164"/>
    </location>
</feature>
<feature type="region of interest" description="RNP-binding" evidence="1">
    <location>
        <begin position="165"/>
        <end position="252"/>
    </location>
</feature>
<feature type="short sequence motif" description="Nuclear localization signal" evidence="1">
    <location>
        <begin position="101"/>
        <end position="105"/>
    </location>
</feature>
<sequence>MSLLTEVETYVLSIVPSGPLKAEIAQRLEDVFAGKNTDLEALMEWLKTRPILSPLTKGILGFVFTLTVPSERGLQRRRFVQNALNGNGDPNNMDRAVKLYRKLKREITFHGAKEVALSYSTGALASCMGLIYNRMGTVTTEVAFGLVCATCEQIADSQHRSHRQMVTTTNPLIRHENRMVLASTTAKAMEQMAGSSEQAAEAMEVASQARQMVQAMRTIGTHPSSSAGLKDDLLENLQAYQKRMGVQMQRFK</sequence>